<feature type="chain" id="PRO_1000203981" description="Protease HtpX homolog">
    <location>
        <begin position="1"/>
        <end position="292"/>
    </location>
</feature>
<feature type="transmembrane region" description="Helical" evidence="1">
    <location>
        <begin position="9"/>
        <end position="29"/>
    </location>
</feature>
<feature type="transmembrane region" description="Helical" evidence="1">
    <location>
        <begin position="31"/>
        <end position="51"/>
    </location>
</feature>
<feature type="transmembrane region" description="Helical" evidence="1">
    <location>
        <begin position="148"/>
        <end position="168"/>
    </location>
</feature>
<feature type="transmembrane region" description="Helical" evidence="1">
    <location>
        <begin position="185"/>
        <end position="205"/>
    </location>
</feature>
<feature type="active site" evidence="1">
    <location>
        <position position="134"/>
    </location>
</feature>
<feature type="binding site" evidence="1">
    <location>
        <position position="133"/>
    </location>
    <ligand>
        <name>Zn(2+)</name>
        <dbReference type="ChEBI" id="CHEBI:29105"/>
        <note>catalytic</note>
    </ligand>
</feature>
<feature type="binding site" evidence="1">
    <location>
        <position position="137"/>
    </location>
    <ligand>
        <name>Zn(2+)</name>
        <dbReference type="ChEBI" id="CHEBI:29105"/>
        <note>catalytic</note>
    </ligand>
</feature>
<feature type="binding site" evidence="1">
    <location>
        <position position="210"/>
    </location>
    <ligand>
        <name>Zn(2+)</name>
        <dbReference type="ChEBI" id="CHEBI:29105"/>
        <note>catalytic</note>
    </ligand>
</feature>
<proteinExistence type="inferred from homology"/>
<reference key="1">
    <citation type="journal article" date="2009" name="Appl. Environ. Microbiol.">
        <title>Metabolic versatility and indigenous origin of the archaeon Thermococcus sibiricus, isolated from a siberian oil reservoir, as revealed by genome analysis.</title>
        <authorList>
            <person name="Mardanov A.V."/>
            <person name="Ravin N.V."/>
            <person name="Svetlitchnyi V.A."/>
            <person name="Beletsky A.V."/>
            <person name="Miroshnichenko M.L."/>
            <person name="Bonch-Osmolovskaya E.A."/>
            <person name="Skryabin K.G."/>
        </authorList>
    </citation>
    <scope>NUCLEOTIDE SEQUENCE [LARGE SCALE GENOMIC DNA]</scope>
    <source>
        <strain>DSM 12597 / MM 739</strain>
    </source>
</reference>
<evidence type="ECO:0000255" key="1">
    <source>
        <dbReference type="HAMAP-Rule" id="MF_00188"/>
    </source>
</evidence>
<sequence>MGLGMWLRTGVLMAFLTGLLMAIGYVLGNETGMMFAFMFALVMNFFSYWYSDKIVLTWYRARILEEDEAPELYEIVRGLAQEAGIPTPKIAIVPTETPNAFATGRNPKNAVVAVTQGLLRILNRDELEGVIAHELSHIKNRDVLIQTLAAVMAGAIMMVARWAGWMLWLGGFGGRDRDRDASGALGAILLIVLAPIAAMLIQMAISRAREYLADETGAKISGKPWALARALEKIEHAVSMRPIKNGNPATAHMFIINPFRGVSFAELFSTHPPTQKRIERLRKIAENMGIAF</sequence>
<comment type="cofactor">
    <cofactor evidence="1">
        <name>Zn(2+)</name>
        <dbReference type="ChEBI" id="CHEBI:29105"/>
    </cofactor>
    <text evidence="1">Binds 1 zinc ion per subunit.</text>
</comment>
<comment type="subcellular location">
    <subcellularLocation>
        <location evidence="1">Cell membrane</location>
        <topology evidence="1">Multi-pass membrane protein</topology>
    </subcellularLocation>
</comment>
<comment type="similarity">
    <text evidence="1">Belongs to the peptidase M48B family.</text>
</comment>
<keyword id="KW-1003">Cell membrane</keyword>
<keyword id="KW-0378">Hydrolase</keyword>
<keyword id="KW-0472">Membrane</keyword>
<keyword id="KW-0479">Metal-binding</keyword>
<keyword id="KW-0482">Metalloprotease</keyword>
<keyword id="KW-0645">Protease</keyword>
<keyword id="KW-1185">Reference proteome</keyword>
<keyword id="KW-0812">Transmembrane</keyword>
<keyword id="KW-1133">Transmembrane helix</keyword>
<keyword id="KW-0862">Zinc</keyword>
<name>HTPX_THESM</name>
<protein>
    <recommendedName>
        <fullName evidence="1">Protease HtpX homolog</fullName>
        <ecNumber evidence="1">3.4.24.-</ecNumber>
    </recommendedName>
</protein>
<gene>
    <name evidence="1" type="primary">htpX</name>
    <name type="ordered locus">TSIB_0972</name>
</gene>
<dbReference type="EC" id="3.4.24.-" evidence="1"/>
<dbReference type="EMBL" id="CP001463">
    <property type="protein sequence ID" value="ACS90030.1"/>
    <property type="molecule type" value="Genomic_DNA"/>
</dbReference>
<dbReference type="RefSeq" id="WP_015849249.1">
    <property type="nucleotide sequence ID" value="NC_012883.1"/>
</dbReference>
<dbReference type="STRING" id="604354.TSIB_0972"/>
<dbReference type="GeneID" id="8095967"/>
<dbReference type="KEGG" id="tsi:TSIB_0972"/>
<dbReference type="eggNOG" id="arCOG01331">
    <property type="taxonomic scope" value="Archaea"/>
</dbReference>
<dbReference type="HOGENOM" id="CLU_042266_3_0_2"/>
<dbReference type="OrthoDB" id="28389at2157"/>
<dbReference type="Proteomes" id="UP000009079">
    <property type="component" value="Chromosome"/>
</dbReference>
<dbReference type="GO" id="GO:0005886">
    <property type="term" value="C:plasma membrane"/>
    <property type="evidence" value="ECO:0007669"/>
    <property type="project" value="UniProtKB-SubCell"/>
</dbReference>
<dbReference type="GO" id="GO:0004222">
    <property type="term" value="F:metalloendopeptidase activity"/>
    <property type="evidence" value="ECO:0007669"/>
    <property type="project" value="UniProtKB-UniRule"/>
</dbReference>
<dbReference type="GO" id="GO:0008270">
    <property type="term" value="F:zinc ion binding"/>
    <property type="evidence" value="ECO:0007669"/>
    <property type="project" value="UniProtKB-UniRule"/>
</dbReference>
<dbReference type="GO" id="GO:0006508">
    <property type="term" value="P:proteolysis"/>
    <property type="evidence" value="ECO:0007669"/>
    <property type="project" value="UniProtKB-KW"/>
</dbReference>
<dbReference type="CDD" id="cd07336">
    <property type="entry name" value="M48B_HtpX_like"/>
    <property type="match status" value="1"/>
</dbReference>
<dbReference type="Gene3D" id="3.30.2010.10">
    <property type="entry name" value="Metalloproteases ('zincins'), catalytic domain"/>
    <property type="match status" value="1"/>
</dbReference>
<dbReference type="HAMAP" id="MF_00188">
    <property type="entry name" value="Pept_M48_protease_HtpX"/>
    <property type="match status" value="1"/>
</dbReference>
<dbReference type="InterPro" id="IPR050083">
    <property type="entry name" value="HtpX_protease"/>
</dbReference>
<dbReference type="InterPro" id="IPR022919">
    <property type="entry name" value="Pept_M48_protease_HtpX"/>
</dbReference>
<dbReference type="InterPro" id="IPR001915">
    <property type="entry name" value="Peptidase_M48"/>
</dbReference>
<dbReference type="NCBIfam" id="NF002826">
    <property type="entry name" value="PRK03001.1"/>
    <property type="match status" value="1"/>
</dbReference>
<dbReference type="PANTHER" id="PTHR43221">
    <property type="entry name" value="PROTEASE HTPX"/>
    <property type="match status" value="1"/>
</dbReference>
<dbReference type="PANTHER" id="PTHR43221:SF2">
    <property type="entry name" value="PROTEASE HTPX HOMOLOG"/>
    <property type="match status" value="1"/>
</dbReference>
<dbReference type="Pfam" id="PF01435">
    <property type="entry name" value="Peptidase_M48"/>
    <property type="match status" value="1"/>
</dbReference>
<organism>
    <name type="scientific">Thermococcus sibiricus (strain DSM 12597 / MM 739)</name>
    <dbReference type="NCBI Taxonomy" id="604354"/>
    <lineage>
        <taxon>Archaea</taxon>
        <taxon>Methanobacteriati</taxon>
        <taxon>Methanobacteriota</taxon>
        <taxon>Thermococci</taxon>
        <taxon>Thermococcales</taxon>
        <taxon>Thermococcaceae</taxon>
        <taxon>Thermococcus</taxon>
    </lineage>
</organism>
<accession>C6A335</accession>